<organism>
    <name type="scientific">Staphylococcus aureus (strain Mu50 / ATCC 700699)</name>
    <dbReference type="NCBI Taxonomy" id="158878"/>
    <lineage>
        <taxon>Bacteria</taxon>
        <taxon>Bacillati</taxon>
        <taxon>Bacillota</taxon>
        <taxon>Bacilli</taxon>
        <taxon>Bacillales</taxon>
        <taxon>Staphylococcaceae</taxon>
        <taxon>Staphylococcus</taxon>
    </lineage>
</organism>
<reference key="1">
    <citation type="journal article" date="2001" name="Lancet">
        <title>Whole genome sequencing of meticillin-resistant Staphylococcus aureus.</title>
        <authorList>
            <person name="Kuroda M."/>
            <person name="Ohta T."/>
            <person name="Uchiyama I."/>
            <person name="Baba T."/>
            <person name="Yuzawa H."/>
            <person name="Kobayashi I."/>
            <person name="Cui L."/>
            <person name="Oguchi A."/>
            <person name="Aoki K."/>
            <person name="Nagai Y."/>
            <person name="Lian J.-Q."/>
            <person name="Ito T."/>
            <person name="Kanamori M."/>
            <person name="Matsumaru H."/>
            <person name="Maruyama A."/>
            <person name="Murakami H."/>
            <person name="Hosoyama A."/>
            <person name="Mizutani-Ui Y."/>
            <person name="Takahashi N.K."/>
            <person name="Sawano T."/>
            <person name="Inoue R."/>
            <person name="Kaito C."/>
            <person name="Sekimizu K."/>
            <person name="Hirakawa H."/>
            <person name="Kuhara S."/>
            <person name="Goto S."/>
            <person name="Yabuzaki J."/>
            <person name="Kanehisa M."/>
            <person name="Yamashita A."/>
            <person name="Oshima K."/>
            <person name="Furuya K."/>
            <person name="Yoshino C."/>
            <person name="Shiba T."/>
            <person name="Hattori M."/>
            <person name="Ogasawara N."/>
            <person name="Hayashi H."/>
            <person name="Hiramatsu K."/>
        </authorList>
    </citation>
    <scope>NUCLEOTIDE SEQUENCE [LARGE SCALE GENOMIC DNA]</scope>
    <source>
        <strain>Mu50 / ATCC 700699</strain>
    </source>
</reference>
<evidence type="ECO:0000250" key="1"/>
<evidence type="ECO:0000255" key="2">
    <source>
        <dbReference type="PROSITE-ProRule" id="PRU00691"/>
    </source>
</evidence>
<evidence type="ECO:0000305" key="3"/>
<feature type="chain" id="PRO_0000120126" description="Thioredoxin">
    <location>
        <begin position="1"/>
        <end position="104"/>
    </location>
</feature>
<feature type="domain" description="Thioredoxin" evidence="2">
    <location>
        <begin position="2"/>
        <end position="104"/>
    </location>
</feature>
<feature type="disulfide bond" description="Redox-active" evidence="2">
    <location>
        <begin position="29"/>
        <end position="32"/>
    </location>
</feature>
<keyword id="KW-1015">Disulfide bond</keyword>
<keyword id="KW-0249">Electron transport</keyword>
<keyword id="KW-0676">Redox-active center</keyword>
<keyword id="KW-0813">Transport</keyword>
<protein>
    <recommendedName>
        <fullName>Thioredoxin</fullName>
        <shortName>Trx</shortName>
    </recommendedName>
</protein>
<name>THIO_STAAM</name>
<comment type="function">
    <text evidence="1">Component of the thioredoxin-thioredoxin reductase system. Participates in various redox reactions through the reversible oxidation of its active center dithiol to a disulfide and catalyzes dithiol-disulfide exchange reactions (By similarity).</text>
</comment>
<comment type="similarity">
    <text evidence="3">Belongs to the thioredoxin family.</text>
</comment>
<sequence>MAIVKVTDADFDSKVESGVQLVDFWATWCGPCKMIAPVLEELAADYEGKADILKLDVDENPSTAAKYEVMSIPTLIVFKDGQPVDKVVGFQPKENLAEVLDKHL</sequence>
<accession>P0A0K4</accession>
<accession>Q9ZEH4</accession>
<gene>
    <name type="primary">trxA</name>
    <name type="ordered locus">SAV1145</name>
</gene>
<proteinExistence type="inferred from homology"/>
<dbReference type="EMBL" id="BA000017">
    <property type="protein sequence ID" value="BAB57307.1"/>
    <property type="molecule type" value="Genomic_DNA"/>
</dbReference>
<dbReference type="RefSeq" id="WP_001018928.1">
    <property type="nucleotide sequence ID" value="NC_002758.2"/>
</dbReference>
<dbReference type="SMR" id="P0A0K4"/>
<dbReference type="GeneID" id="98345462"/>
<dbReference type="KEGG" id="sav:SAV1145"/>
<dbReference type="HOGENOM" id="CLU_090389_10_2_9"/>
<dbReference type="PhylomeDB" id="P0A0K4"/>
<dbReference type="Proteomes" id="UP000002481">
    <property type="component" value="Chromosome"/>
</dbReference>
<dbReference type="GO" id="GO:0005829">
    <property type="term" value="C:cytosol"/>
    <property type="evidence" value="ECO:0007669"/>
    <property type="project" value="TreeGrafter"/>
</dbReference>
<dbReference type="GO" id="GO:0015035">
    <property type="term" value="F:protein-disulfide reductase activity"/>
    <property type="evidence" value="ECO:0007669"/>
    <property type="project" value="InterPro"/>
</dbReference>
<dbReference type="GO" id="GO:0045454">
    <property type="term" value="P:cell redox homeostasis"/>
    <property type="evidence" value="ECO:0007669"/>
    <property type="project" value="TreeGrafter"/>
</dbReference>
<dbReference type="CDD" id="cd02947">
    <property type="entry name" value="TRX_family"/>
    <property type="match status" value="1"/>
</dbReference>
<dbReference type="FunFam" id="3.40.30.10:FF:000001">
    <property type="entry name" value="Thioredoxin"/>
    <property type="match status" value="1"/>
</dbReference>
<dbReference type="Gene3D" id="3.40.30.10">
    <property type="entry name" value="Glutaredoxin"/>
    <property type="match status" value="1"/>
</dbReference>
<dbReference type="InterPro" id="IPR005746">
    <property type="entry name" value="Thioredoxin"/>
</dbReference>
<dbReference type="InterPro" id="IPR036249">
    <property type="entry name" value="Thioredoxin-like_sf"/>
</dbReference>
<dbReference type="InterPro" id="IPR017937">
    <property type="entry name" value="Thioredoxin_CS"/>
</dbReference>
<dbReference type="InterPro" id="IPR013766">
    <property type="entry name" value="Thioredoxin_domain"/>
</dbReference>
<dbReference type="NCBIfam" id="TIGR01068">
    <property type="entry name" value="thioredoxin"/>
    <property type="match status" value="1"/>
</dbReference>
<dbReference type="PANTHER" id="PTHR45663">
    <property type="entry name" value="GEO12009P1"/>
    <property type="match status" value="1"/>
</dbReference>
<dbReference type="PANTHER" id="PTHR45663:SF11">
    <property type="entry name" value="GEO12009P1"/>
    <property type="match status" value="1"/>
</dbReference>
<dbReference type="Pfam" id="PF00085">
    <property type="entry name" value="Thioredoxin"/>
    <property type="match status" value="1"/>
</dbReference>
<dbReference type="PIRSF" id="PIRSF000077">
    <property type="entry name" value="Thioredoxin"/>
    <property type="match status" value="1"/>
</dbReference>
<dbReference type="PRINTS" id="PR00421">
    <property type="entry name" value="THIOREDOXIN"/>
</dbReference>
<dbReference type="SUPFAM" id="SSF52833">
    <property type="entry name" value="Thioredoxin-like"/>
    <property type="match status" value="1"/>
</dbReference>
<dbReference type="PROSITE" id="PS00194">
    <property type="entry name" value="THIOREDOXIN_1"/>
    <property type="match status" value="1"/>
</dbReference>
<dbReference type="PROSITE" id="PS51352">
    <property type="entry name" value="THIOREDOXIN_2"/>
    <property type="match status" value="1"/>
</dbReference>